<feature type="chain" id="PRO_0000269722" description="Ribosome production factor 2 homolog">
    <location>
        <begin position="1"/>
        <end position="306"/>
    </location>
</feature>
<feature type="domain" description="Brix" evidence="2">
    <location>
        <begin position="31"/>
        <end position="234"/>
    </location>
</feature>
<feature type="region of interest" description="Disordered" evidence="3">
    <location>
        <begin position="268"/>
        <end position="306"/>
    </location>
</feature>
<feature type="compositionally biased region" description="Basic residues" evidence="3">
    <location>
        <begin position="277"/>
        <end position="289"/>
    </location>
</feature>
<feature type="compositionally biased region" description="Basic and acidic residues" evidence="3">
    <location>
        <begin position="290"/>
        <end position="300"/>
    </location>
</feature>
<evidence type="ECO:0000250" key="1">
    <source>
        <dbReference type="UniProtKB" id="Q9H7B2"/>
    </source>
</evidence>
<evidence type="ECO:0000255" key="2">
    <source>
        <dbReference type="PROSITE-ProRule" id="PRU00034"/>
    </source>
</evidence>
<evidence type="ECO:0000256" key="3">
    <source>
        <dbReference type="SAM" id="MobiDB-lite"/>
    </source>
</evidence>
<evidence type="ECO:0000305" key="4"/>
<reference key="1">
    <citation type="submission" date="2005-11" db="EMBL/GenBank/DDBJ databases">
        <authorList>
            <consortium name="NIH - Mammalian Gene Collection (MGC) project"/>
        </authorList>
    </citation>
    <scope>NUCLEOTIDE SEQUENCE [LARGE SCALE MRNA]</scope>
    <source>
        <strain>Crossbred X Angus</strain>
        <tissue>Liver</tissue>
    </source>
</reference>
<gene>
    <name type="primary">RPF2</name>
    <name type="synonym">BXDC1</name>
</gene>
<proteinExistence type="evidence at transcript level"/>
<keyword id="KW-0539">Nucleus</keyword>
<keyword id="KW-1185">Reference proteome</keyword>
<keyword id="KW-0690">Ribosome biogenesis</keyword>
<sequence>MDALDRVVKPKTKRAKRFLEKREPKLSENIKNAMLIKGGNANSTVTQVLRDVYALKKPYGILYKKKNITRPFEDQTSLEFFSKKSDCSLFMFGSHNKKRPNNLVIGRMYDYHVLDIIELGIEKFVSLKDIKNSKCPEGTKPMLIFAGDDFDVTEDYRRLKSLLIDFFRGPTVSNIRLAGLEYVLHFTALNGKIYFRSYKLLLKKSGCRTPRIELEEMGPSLDLVLRRTHLASDDLYKLSMKMPKALKPKKKKNISHDTFGTTYGRIHMQKQDLSKLQTRKMKGLKKRPAERKAEDEENKSKRIKKN</sequence>
<dbReference type="EMBL" id="BC110138">
    <property type="protein sequence ID" value="AAI10139.1"/>
    <property type="molecule type" value="mRNA"/>
</dbReference>
<dbReference type="RefSeq" id="NP_001039548.1">
    <property type="nucleotide sequence ID" value="NM_001046083.2"/>
</dbReference>
<dbReference type="SMR" id="Q2YDN6"/>
<dbReference type="FunCoup" id="Q2YDN6">
    <property type="interactions" value="2912"/>
</dbReference>
<dbReference type="STRING" id="9913.ENSBTAP00000073241"/>
<dbReference type="PaxDb" id="9913-ENSBTAP00000022060"/>
<dbReference type="GeneID" id="511294"/>
<dbReference type="KEGG" id="bta:511294"/>
<dbReference type="CTD" id="84154"/>
<dbReference type="eggNOG" id="KOG3031">
    <property type="taxonomic scope" value="Eukaryota"/>
</dbReference>
<dbReference type="InParanoid" id="Q2YDN6"/>
<dbReference type="OrthoDB" id="407658at2759"/>
<dbReference type="Proteomes" id="UP000009136">
    <property type="component" value="Unplaced"/>
</dbReference>
<dbReference type="GO" id="GO:0005730">
    <property type="term" value="C:nucleolus"/>
    <property type="evidence" value="ECO:0000318"/>
    <property type="project" value="GO_Central"/>
</dbReference>
<dbReference type="GO" id="GO:0008097">
    <property type="term" value="F:5S rRNA binding"/>
    <property type="evidence" value="ECO:0000250"/>
    <property type="project" value="UniProtKB"/>
</dbReference>
<dbReference type="GO" id="GO:0019843">
    <property type="term" value="F:rRNA binding"/>
    <property type="evidence" value="ECO:0000318"/>
    <property type="project" value="GO_Central"/>
</dbReference>
<dbReference type="GO" id="GO:0000463">
    <property type="term" value="P:maturation of LSU-rRNA from tricistronic rRNA transcript (SSU-rRNA, 5.8S rRNA, LSU-rRNA)"/>
    <property type="evidence" value="ECO:0000318"/>
    <property type="project" value="GO_Central"/>
</dbReference>
<dbReference type="GO" id="GO:1902570">
    <property type="term" value="P:protein localization to nucleolus"/>
    <property type="evidence" value="ECO:0000250"/>
    <property type="project" value="UniProtKB"/>
</dbReference>
<dbReference type="GO" id="GO:1901796">
    <property type="term" value="P:regulation of signal transduction by p53 class mediator"/>
    <property type="evidence" value="ECO:0000250"/>
    <property type="project" value="UniProtKB"/>
</dbReference>
<dbReference type="GO" id="GO:0000027">
    <property type="term" value="P:ribosomal large subunit assembly"/>
    <property type="evidence" value="ECO:0007669"/>
    <property type="project" value="InterPro"/>
</dbReference>
<dbReference type="GO" id="GO:0042273">
    <property type="term" value="P:ribosomal large subunit biogenesis"/>
    <property type="evidence" value="ECO:0000250"/>
    <property type="project" value="UniProtKB"/>
</dbReference>
<dbReference type="InterPro" id="IPR007109">
    <property type="entry name" value="Brix"/>
</dbReference>
<dbReference type="InterPro" id="IPR039770">
    <property type="entry name" value="Rpf2"/>
</dbReference>
<dbReference type="PANTHER" id="PTHR12728">
    <property type="entry name" value="BRIX DOMAIN CONTAINING PROTEIN"/>
    <property type="match status" value="1"/>
</dbReference>
<dbReference type="PANTHER" id="PTHR12728:SF0">
    <property type="entry name" value="RIBOSOME PRODUCTION FACTOR 2 HOMOLOG"/>
    <property type="match status" value="1"/>
</dbReference>
<dbReference type="Pfam" id="PF04427">
    <property type="entry name" value="Brix"/>
    <property type="match status" value="1"/>
</dbReference>
<dbReference type="SMART" id="SM00879">
    <property type="entry name" value="Brix"/>
    <property type="match status" value="1"/>
</dbReference>
<dbReference type="PROSITE" id="PS50833">
    <property type="entry name" value="BRIX"/>
    <property type="match status" value="1"/>
</dbReference>
<accession>Q2YDN6</accession>
<organism>
    <name type="scientific">Bos taurus</name>
    <name type="common">Bovine</name>
    <dbReference type="NCBI Taxonomy" id="9913"/>
    <lineage>
        <taxon>Eukaryota</taxon>
        <taxon>Metazoa</taxon>
        <taxon>Chordata</taxon>
        <taxon>Craniata</taxon>
        <taxon>Vertebrata</taxon>
        <taxon>Euteleostomi</taxon>
        <taxon>Mammalia</taxon>
        <taxon>Eutheria</taxon>
        <taxon>Laurasiatheria</taxon>
        <taxon>Artiodactyla</taxon>
        <taxon>Ruminantia</taxon>
        <taxon>Pecora</taxon>
        <taxon>Bovidae</taxon>
        <taxon>Bovinae</taxon>
        <taxon>Bos</taxon>
    </lineage>
</organism>
<protein>
    <recommendedName>
        <fullName>Ribosome production factor 2 homolog</fullName>
    </recommendedName>
    <alternativeName>
        <fullName>Brix domain-containing protein 1</fullName>
    </alternativeName>
    <alternativeName>
        <fullName>Ribosome biogenesis protein RPF2 homolog</fullName>
    </alternativeName>
</protein>
<name>RPF2_BOVIN</name>
<comment type="function">
    <text evidence="1">Involved in ribosomal large subunit assembly. May regulate the localization of the 5S RNP/5S ribonucleoprotein particle to the nucleolus.</text>
</comment>
<comment type="subunit">
    <text evidence="1">Component of a hexameric 5S RNP precursor complex, composed of 5S RNA, RRS1, RPF2/BXDC1, RPL5, RPL11 and HEATR3; this complex acts as a precursor for ribosome assembly.</text>
</comment>
<comment type="subcellular location">
    <subcellularLocation>
        <location evidence="1">Nucleus</location>
        <location evidence="1">Nucleolus</location>
    </subcellularLocation>
    <text evidence="1">Associated with the nucleolus in an RNA-dependent manner.</text>
</comment>
<comment type="similarity">
    <text evidence="4">Belongs to the RPF2 family.</text>
</comment>